<gene>
    <name evidence="1" type="primary">rplJ</name>
    <name type="ordered locus">BSUIS_A1293</name>
</gene>
<reference key="1">
    <citation type="submission" date="2007-12" db="EMBL/GenBank/DDBJ databases">
        <title>Brucella suis ATCC 23445 whole genome shotgun sequencing project.</title>
        <authorList>
            <person name="Setubal J.C."/>
            <person name="Bowns C."/>
            <person name="Boyle S."/>
            <person name="Crasta O.R."/>
            <person name="Czar M.J."/>
            <person name="Dharmanolla C."/>
            <person name="Gillespie J.J."/>
            <person name="Kenyon R.W."/>
            <person name="Lu J."/>
            <person name="Mane S."/>
            <person name="Mohapatra S."/>
            <person name="Nagrani S."/>
            <person name="Purkayastha A."/>
            <person name="Rajasimha H.K."/>
            <person name="Shallom J.M."/>
            <person name="Shallom S."/>
            <person name="Shukla M."/>
            <person name="Snyder E.E."/>
            <person name="Sobral B.W."/>
            <person name="Wattam A.R."/>
            <person name="Will R."/>
            <person name="Williams K."/>
            <person name="Yoo H."/>
            <person name="Bruce D."/>
            <person name="Detter C."/>
            <person name="Munk C."/>
            <person name="Brettin T.S."/>
        </authorList>
    </citation>
    <scope>NUCLEOTIDE SEQUENCE [LARGE SCALE GENOMIC DNA]</scope>
    <source>
        <strain>ATCC 23445 / NCTC 10510</strain>
    </source>
</reference>
<feature type="chain" id="PRO_1000079535" description="Large ribosomal subunit protein uL10">
    <location>
        <begin position="1"/>
        <end position="172"/>
    </location>
</feature>
<keyword id="KW-0687">Ribonucleoprotein</keyword>
<keyword id="KW-0689">Ribosomal protein</keyword>
<keyword id="KW-0694">RNA-binding</keyword>
<keyword id="KW-0699">rRNA-binding</keyword>
<evidence type="ECO:0000255" key="1">
    <source>
        <dbReference type="HAMAP-Rule" id="MF_00362"/>
    </source>
</evidence>
<evidence type="ECO:0000305" key="2"/>
<sequence>MDRAEKREFVAWLNGAFKESGSVVVAHYTGLTVAQMSDLRSKMRDAGGAVKVAKNRLAKIALQGTESEGIADLFTGQTVVAYANDPITAPKVAVEFAKANDKLVILGGAMGATTLNADGVKSLASLPSLDELRAKLVGMIQTPAQRLAVLTSAPAGQIARVIGAHARKNEAA</sequence>
<accession>B0CH43</accession>
<protein>
    <recommendedName>
        <fullName evidence="1">Large ribosomal subunit protein uL10</fullName>
    </recommendedName>
    <alternativeName>
        <fullName evidence="2">50S ribosomal protein L10</fullName>
    </alternativeName>
</protein>
<comment type="function">
    <text evidence="1">Forms part of the ribosomal stalk, playing a central role in the interaction of the ribosome with GTP-bound translation factors.</text>
</comment>
<comment type="subunit">
    <text evidence="1">Part of the ribosomal stalk of the 50S ribosomal subunit. The N-terminus interacts with L11 and the large rRNA to form the base of the stalk. The C-terminus forms an elongated spine to which L12 dimers bind in a sequential fashion forming a multimeric L10(L12)X complex.</text>
</comment>
<comment type="similarity">
    <text evidence="1">Belongs to the universal ribosomal protein uL10 family.</text>
</comment>
<dbReference type="EMBL" id="CP000911">
    <property type="protein sequence ID" value="ABY38344.1"/>
    <property type="molecule type" value="Genomic_DNA"/>
</dbReference>
<dbReference type="RefSeq" id="WP_004688465.1">
    <property type="nucleotide sequence ID" value="NC_010169.1"/>
</dbReference>
<dbReference type="SMR" id="B0CH43"/>
<dbReference type="KEGG" id="bmt:BSUIS_A1293"/>
<dbReference type="HOGENOM" id="CLU_092227_0_0_5"/>
<dbReference type="Proteomes" id="UP000008545">
    <property type="component" value="Chromosome I"/>
</dbReference>
<dbReference type="GO" id="GO:0015934">
    <property type="term" value="C:large ribosomal subunit"/>
    <property type="evidence" value="ECO:0007669"/>
    <property type="project" value="InterPro"/>
</dbReference>
<dbReference type="GO" id="GO:0070180">
    <property type="term" value="F:large ribosomal subunit rRNA binding"/>
    <property type="evidence" value="ECO:0007669"/>
    <property type="project" value="UniProtKB-UniRule"/>
</dbReference>
<dbReference type="GO" id="GO:0003735">
    <property type="term" value="F:structural constituent of ribosome"/>
    <property type="evidence" value="ECO:0007669"/>
    <property type="project" value="InterPro"/>
</dbReference>
<dbReference type="GO" id="GO:0006412">
    <property type="term" value="P:translation"/>
    <property type="evidence" value="ECO:0007669"/>
    <property type="project" value="UniProtKB-UniRule"/>
</dbReference>
<dbReference type="CDD" id="cd05797">
    <property type="entry name" value="Ribosomal_L10"/>
    <property type="match status" value="1"/>
</dbReference>
<dbReference type="Gene3D" id="3.30.70.1730">
    <property type="match status" value="1"/>
</dbReference>
<dbReference type="Gene3D" id="6.10.250.290">
    <property type="match status" value="1"/>
</dbReference>
<dbReference type="HAMAP" id="MF_00362">
    <property type="entry name" value="Ribosomal_uL10"/>
    <property type="match status" value="1"/>
</dbReference>
<dbReference type="InterPro" id="IPR001790">
    <property type="entry name" value="Ribosomal_uL10"/>
</dbReference>
<dbReference type="InterPro" id="IPR043141">
    <property type="entry name" value="Ribosomal_uL10-like_sf"/>
</dbReference>
<dbReference type="InterPro" id="IPR022973">
    <property type="entry name" value="Ribosomal_uL10_bac"/>
</dbReference>
<dbReference type="InterPro" id="IPR047865">
    <property type="entry name" value="Ribosomal_uL10_bac_type"/>
</dbReference>
<dbReference type="InterPro" id="IPR002363">
    <property type="entry name" value="Ribosomal_uL10_CS_bac"/>
</dbReference>
<dbReference type="NCBIfam" id="NF000955">
    <property type="entry name" value="PRK00099.1-1"/>
    <property type="match status" value="1"/>
</dbReference>
<dbReference type="PANTHER" id="PTHR11560">
    <property type="entry name" value="39S RIBOSOMAL PROTEIN L10, MITOCHONDRIAL"/>
    <property type="match status" value="1"/>
</dbReference>
<dbReference type="Pfam" id="PF00466">
    <property type="entry name" value="Ribosomal_L10"/>
    <property type="match status" value="1"/>
</dbReference>
<dbReference type="SUPFAM" id="SSF160369">
    <property type="entry name" value="Ribosomal protein L10-like"/>
    <property type="match status" value="1"/>
</dbReference>
<dbReference type="PROSITE" id="PS01109">
    <property type="entry name" value="RIBOSOMAL_L10"/>
    <property type="match status" value="1"/>
</dbReference>
<organism>
    <name type="scientific">Brucella suis (strain ATCC 23445 / NCTC 10510)</name>
    <dbReference type="NCBI Taxonomy" id="470137"/>
    <lineage>
        <taxon>Bacteria</taxon>
        <taxon>Pseudomonadati</taxon>
        <taxon>Pseudomonadota</taxon>
        <taxon>Alphaproteobacteria</taxon>
        <taxon>Hyphomicrobiales</taxon>
        <taxon>Brucellaceae</taxon>
        <taxon>Brucella/Ochrobactrum group</taxon>
        <taxon>Brucella</taxon>
    </lineage>
</organism>
<name>RL10_BRUSI</name>
<proteinExistence type="inferred from homology"/>